<protein>
    <recommendedName>
        <fullName evidence="1">Deoxyguanosinetriphosphate triphosphohydrolase-like protein 2</fullName>
    </recommendedName>
</protein>
<proteinExistence type="inferred from homology"/>
<keyword id="KW-0378">Hydrolase</keyword>
<accession>Q989G8</accession>
<gene>
    <name type="ordered locus">mlr6429</name>
</gene>
<sequence length="476" mass="53620">MYTDADRSREVVPEKDGHDKKWRDEFGRDYGRIIHSASFRRQQGKTQVFPSRESDFFRNRLTHSLEVAQIAQGIAERINYDYDKDLGGKIDPRLCATAGLVHDIGHPPFGHNGESALDKAMQRYGGFEGNAQTLRILTRLEKKLRYAEPLAGDDRAGLNLCHRTIAATLKYDNEIPAIRKAADGFVKGYYGSEKIIVDRVKASVLNGYVLGAEEKFCTIECSIMDLADDIAYSVYDLEDCFKVGFLSPAEMLASDDALLSAVAKRASKPMKRTVTINEIQAVFMEIFSEIIEQPAEDADSPLDGIVIEDDIAQQAKRDESLLTFAEAYRTSKVMSEDGYKRTEFSSELVHQFISGVELKAHKECPSLSQIYLPEKLMLRKEVLKQYTFVAAIYAPRVKLGEYRGYDLVTDIFKALMGDRGDLLMPADVRGRIRKAPNVSVKAREVCDFVAGMTDRYAMEFWARLNSDAAESMFKPI</sequence>
<comment type="similarity">
    <text evidence="1">Belongs to the dGTPase family. Type 2 subfamily.</text>
</comment>
<feature type="chain" id="PRO_0000205315" description="Deoxyguanosinetriphosphate triphosphohydrolase-like protein 2">
    <location>
        <begin position="1"/>
        <end position="476"/>
    </location>
</feature>
<feature type="domain" description="HD" evidence="2">
    <location>
        <begin position="60"/>
        <end position="233"/>
    </location>
</feature>
<feature type="region of interest" description="Disordered" evidence="3">
    <location>
        <begin position="1"/>
        <end position="20"/>
    </location>
</feature>
<evidence type="ECO:0000255" key="1">
    <source>
        <dbReference type="HAMAP-Rule" id="MF_01212"/>
    </source>
</evidence>
<evidence type="ECO:0000255" key="2">
    <source>
        <dbReference type="PROSITE-ProRule" id="PRU01175"/>
    </source>
</evidence>
<evidence type="ECO:0000256" key="3">
    <source>
        <dbReference type="SAM" id="MobiDB-lite"/>
    </source>
</evidence>
<dbReference type="EMBL" id="BA000012">
    <property type="protein sequence ID" value="BAB52728.1"/>
    <property type="molecule type" value="Genomic_DNA"/>
</dbReference>
<dbReference type="RefSeq" id="WP_010914043.1">
    <property type="nucleotide sequence ID" value="NC_002678.2"/>
</dbReference>
<dbReference type="SMR" id="Q989G8"/>
<dbReference type="KEGG" id="mlo:mlr6429"/>
<dbReference type="PATRIC" id="fig|266835.9.peg.5104"/>
<dbReference type="eggNOG" id="COG0232">
    <property type="taxonomic scope" value="Bacteria"/>
</dbReference>
<dbReference type="HOGENOM" id="CLU_028163_0_1_5"/>
<dbReference type="Proteomes" id="UP000000552">
    <property type="component" value="Chromosome"/>
</dbReference>
<dbReference type="GO" id="GO:0008832">
    <property type="term" value="F:dGTPase activity"/>
    <property type="evidence" value="ECO:0007669"/>
    <property type="project" value="TreeGrafter"/>
</dbReference>
<dbReference type="GO" id="GO:0006203">
    <property type="term" value="P:dGTP catabolic process"/>
    <property type="evidence" value="ECO:0007669"/>
    <property type="project" value="TreeGrafter"/>
</dbReference>
<dbReference type="CDD" id="cd00077">
    <property type="entry name" value="HDc"/>
    <property type="match status" value="1"/>
</dbReference>
<dbReference type="Gene3D" id="1.10.3210.10">
    <property type="entry name" value="Hypothetical protein af1432"/>
    <property type="match status" value="2"/>
</dbReference>
<dbReference type="Gene3D" id="1.10.3410.10">
    <property type="entry name" value="putative deoxyguanosinetriphosphate triphosphohydrolase like domain"/>
    <property type="match status" value="1"/>
</dbReference>
<dbReference type="HAMAP" id="MF_01212">
    <property type="entry name" value="dGTPase_type2"/>
    <property type="match status" value="1"/>
</dbReference>
<dbReference type="InterPro" id="IPR023293">
    <property type="entry name" value="dGTP_triP_hydro_central_sf"/>
</dbReference>
<dbReference type="InterPro" id="IPR006261">
    <property type="entry name" value="dGTPase"/>
</dbReference>
<dbReference type="InterPro" id="IPR050135">
    <property type="entry name" value="dGTPase-like"/>
</dbReference>
<dbReference type="InterPro" id="IPR023023">
    <property type="entry name" value="dNTPase_2"/>
</dbReference>
<dbReference type="InterPro" id="IPR003607">
    <property type="entry name" value="HD/PDEase_dom"/>
</dbReference>
<dbReference type="InterPro" id="IPR006674">
    <property type="entry name" value="HD_domain"/>
</dbReference>
<dbReference type="InterPro" id="IPR026875">
    <property type="entry name" value="PHydrolase_assoc_dom"/>
</dbReference>
<dbReference type="NCBIfam" id="TIGR01353">
    <property type="entry name" value="dGTP_triPase"/>
    <property type="match status" value="1"/>
</dbReference>
<dbReference type="PANTHER" id="PTHR11373:SF32">
    <property type="entry name" value="DEOXYGUANOSINETRIPHOSPHATE TRIPHOSPHOHYDROLASE"/>
    <property type="match status" value="1"/>
</dbReference>
<dbReference type="PANTHER" id="PTHR11373">
    <property type="entry name" value="DEOXYNUCLEOSIDE TRIPHOSPHATE TRIPHOSPHOHYDROLASE"/>
    <property type="match status" value="1"/>
</dbReference>
<dbReference type="Pfam" id="PF01966">
    <property type="entry name" value="HD"/>
    <property type="match status" value="1"/>
</dbReference>
<dbReference type="Pfam" id="PF13286">
    <property type="entry name" value="HD_assoc"/>
    <property type="match status" value="1"/>
</dbReference>
<dbReference type="SMART" id="SM00471">
    <property type="entry name" value="HDc"/>
    <property type="match status" value="1"/>
</dbReference>
<dbReference type="SUPFAM" id="SSF109604">
    <property type="entry name" value="HD-domain/PDEase-like"/>
    <property type="match status" value="1"/>
</dbReference>
<dbReference type="PROSITE" id="PS51831">
    <property type="entry name" value="HD"/>
    <property type="match status" value="1"/>
</dbReference>
<organism>
    <name type="scientific">Mesorhizobium japonicum (strain LMG 29417 / CECT 9101 / MAFF 303099)</name>
    <name type="common">Mesorhizobium loti (strain MAFF 303099)</name>
    <dbReference type="NCBI Taxonomy" id="266835"/>
    <lineage>
        <taxon>Bacteria</taxon>
        <taxon>Pseudomonadati</taxon>
        <taxon>Pseudomonadota</taxon>
        <taxon>Alphaproteobacteria</taxon>
        <taxon>Hyphomicrobiales</taxon>
        <taxon>Phyllobacteriaceae</taxon>
        <taxon>Mesorhizobium</taxon>
    </lineage>
</organism>
<name>DGT1B_RHILO</name>
<reference key="1">
    <citation type="journal article" date="2000" name="DNA Res.">
        <title>Complete genome structure of the nitrogen-fixing symbiotic bacterium Mesorhizobium loti.</title>
        <authorList>
            <person name="Kaneko T."/>
            <person name="Nakamura Y."/>
            <person name="Sato S."/>
            <person name="Asamizu E."/>
            <person name="Kato T."/>
            <person name="Sasamoto S."/>
            <person name="Watanabe A."/>
            <person name="Idesawa K."/>
            <person name="Ishikawa A."/>
            <person name="Kawashima K."/>
            <person name="Kimura T."/>
            <person name="Kishida Y."/>
            <person name="Kiyokawa C."/>
            <person name="Kohara M."/>
            <person name="Matsumoto M."/>
            <person name="Matsuno A."/>
            <person name="Mochizuki Y."/>
            <person name="Nakayama S."/>
            <person name="Nakazaki N."/>
            <person name="Shimpo S."/>
            <person name="Sugimoto M."/>
            <person name="Takeuchi C."/>
            <person name="Yamada M."/>
            <person name="Tabata S."/>
        </authorList>
    </citation>
    <scope>NUCLEOTIDE SEQUENCE [LARGE SCALE GENOMIC DNA]</scope>
    <source>
        <strain>LMG 29417 / CECT 9101 / MAFF 303099</strain>
    </source>
</reference>